<evidence type="ECO:0000250" key="1"/>
<evidence type="ECO:0000255" key="2"/>
<evidence type="ECO:0000305" key="3"/>
<accession>B6DCM0</accession>
<sequence>MMKVLVVVALLVTLISYSSSEGIDDLEADELLSLMANEQTRKECIPKHHECTSNKHGCCRGNFFKYKCQCTTVVTQDGEQTERCFCGTPPHRKAAELVVGFGKKIFG</sequence>
<reference key="1">
    <citation type="journal article" date="2010" name="Zoology">
        <title>Transcriptome analysis of the venom glands of the Chinese wolf spider Lycosa singoriensis.</title>
        <authorList>
            <person name="Zhang Y."/>
            <person name="Chen J."/>
            <person name="Tang X."/>
            <person name="Wang F."/>
            <person name="Jiang L."/>
            <person name="Xiong X."/>
            <person name="Wang M."/>
            <person name="Rong M."/>
            <person name="Liu Z."/>
            <person name="Liang S."/>
        </authorList>
    </citation>
    <scope>NUCLEOTIDE SEQUENCE [LARGE SCALE MRNA]</scope>
    <source>
        <tissue>Venom gland</tissue>
    </source>
</reference>
<keyword id="KW-1015">Disulfide bond</keyword>
<keyword id="KW-0960">Knottin</keyword>
<keyword id="KW-0964">Secreted</keyword>
<keyword id="KW-0732">Signal</keyword>
<keyword id="KW-0800">Toxin</keyword>
<comment type="subcellular location">
    <subcellularLocation>
        <location evidence="1">Secreted</location>
    </subcellularLocation>
</comment>
<comment type="tissue specificity">
    <text>Expressed by the venom gland.</text>
</comment>
<comment type="domain">
    <text evidence="1">The presence of a 'disulfide through disulfide knot' structurally defines this protein as a knottin.</text>
</comment>
<comment type="similarity">
    <text evidence="3">Belongs to the neurotoxin 19 (CSTX) family. 04 (U1-Lctx) subfamily.</text>
</comment>
<name>TX131_LYCSI</name>
<protein>
    <recommendedName>
        <fullName>U1-lycotoxin-Ls1p</fullName>
    </recommendedName>
    <alternativeName>
        <fullName>Toxin-like structure LSTX-A31</fullName>
    </alternativeName>
</protein>
<dbReference type="EMBL" id="EU925954">
    <property type="protein sequence ID" value="ACI41286.1"/>
    <property type="molecule type" value="mRNA"/>
</dbReference>
<dbReference type="EMBL" id="FM863958">
    <property type="protein sequence ID" value="CAS03556.1"/>
    <property type="molecule type" value="mRNA"/>
</dbReference>
<dbReference type="SMR" id="B6DCM0"/>
<dbReference type="ArachnoServer" id="AS000903">
    <property type="toxin name" value="U1-lycotoxin-Ls1p"/>
</dbReference>
<dbReference type="GO" id="GO:0005576">
    <property type="term" value="C:extracellular region"/>
    <property type="evidence" value="ECO:0007669"/>
    <property type="project" value="UniProtKB-SubCell"/>
</dbReference>
<dbReference type="GO" id="GO:0090729">
    <property type="term" value="F:toxin activity"/>
    <property type="evidence" value="ECO:0007669"/>
    <property type="project" value="UniProtKB-KW"/>
</dbReference>
<dbReference type="InterPro" id="IPR019553">
    <property type="entry name" value="Spider_toxin_CSTX_knottin"/>
</dbReference>
<dbReference type="InterPro" id="IPR011142">
    <property type="entry name" value="Spider_toxin_CSTX_Knottin_CS"/>
</dbReference>
<dbReference type="Pfam" id="PF10530">
    <property type="entry name" value="Toxin_35"/>
    <property type="match status" value="1"/>
</dbReference>
<dbReference type="PROSITE" id="PS60029">
    <property type="entry name" value="SPIDER_CSTX"/>
    <property type="match status" value="1"/>
</dbReference>
<proteinExistence type="evidence at transcript level"/>
<feature type="signal peptide" evidence="2">
    <location>
        <begin position="1"/>
        <end position="20"/>
    </location>
</feature>
<feature type="propeptide" id="PRO_0000401557" evidence="1">
    <location>
        <begin position="21"/>
        <end position="41"/>
    </location>
</feature>
<feature type="chain" id="PRO_0000401558" description="U1-lycotoxin-Ls1p">
    <location>
        <begin position="42"/>
        <end position="107"/>
    </location>
</feature>
<feature type="disulfide bond" evidence="1">
    <location>
        <begin position="44"/>
        <end position="59"/>
    </location>
</feature>
<feature type="disulfide bond" evidence="1">
    <location>
        <begin position="51"/>
        <end position="68"/>
    </location>
</feature>
<feature type="disulfide bond" evidence="1">
    <location>
        <begin position="58"/>
        <end position="86"/>
    </location>
</feature>
<feature type="disulfide bond" evidence="1">
    <location>
        <begin position="70"/>
        <end position="84"/>
    </location>
</feature>
<organism>
    <name type="scientific">Lycosa singoriensis</name>
    <name type="common">Wolf spider</name>
    <name type="synonym">Aranea singoriensis</name>
    <dbReference type="NCBI Taxonomy" id="434756"/>
    <lineage>
        <taxon>Eukaryota</taxon>
        <taxon>Metazoa</taxon>
        <taxon>Ecdysozoa</taxon>
        <taxon>Arthropoda</taxon>
        <taxon>Chelicerata</taxon>
        <taxon>Arachnida</taxon>
        <taxon>Araneae</taxon>
        <taxon>Araneomorphae</taxon>
        <taxon>Entelegynae</taxon>
        <taxon>Lycosoidea</taxon>
        <taxon>Lycosidae</taxon>
        <taxon>Lycosa</taxon>
    </lineage>
</organism>